<sequence>TESYFVFSVGM</sequence>
<name>AMP2_COCNU</name>
<organism>
    <name type="scientific">Cocos nucifera</name>
    <name type="common">Coconut palm</name>
    <dbReference type="NCBI Taxonomy" id="13894"/>
    <lineage>
        <taxon>Eukaryota</taxon>
        <taxon>Viridiplantae</taxon>
        <taxon>Streptophyta</taxon>
        <taxon>Embryophyta</taxon>
        <taxon>Tracheophyta</taxon>
        <taxon>Spermatophyta</taxon>
        <taxon>Magnoliopsida</taxon>
        <taxon>Liliopsida</taxon>
        <taxon>Arecaceae</taxon>
        <taxon>Arecoideae</taxon>
        <taxon>Cocoseae</taxon>
        <taxon>Attaleinae</taxon>
        <taxon>Cocos</taxon>
    </lineage>
</organism>
<keyword id="KW-0929">Antimicrobial</keyword>
<keyword id="KW-0903">Direct protein sequencing</keyword>
<keyword id="KW-0611">Plant defense</keyword>
<keyword id="KW-0964">Secreted</keyword>
<protein>
    <recommendedName>
        <fullName evidence="2">Antimicrobial peptide 2</fullName>
        <shortName evidence="2">Cn-AMP2</shortName>
    </recommendedName>
</protein>
<accession>P86706</accession>
<dbReference type="GO" id="GO:0005615">
    <property type="term" value="C:extracellular space"/>
    <property type="evidence" value="ECO:0000314"/>
    <property type="project" value="UniProtKB"/>
</dbReference>
<dbReference type="GO" id="GO:0050829">
    <property type="term" value="P:defense response to Gram-negative bacterium"/>
    <property type="evidence" value="ECO:0000314"/>
    <property type="project" value="UniProtKB"/>
</dbReference>
<dbReference type="GO" id="GO:0050830">
    <property type="term" value="P:defense response to Gram-positive bacterium"/>
    <property type="evidence" value="ECO:0000314"/>
    <property type="project" value="UniProtKB"/>
</dbReference>
<feature type="peptide" id="PRO_0000399052" description="Antimicrobial peptide 2" evidence="1">
    <location>
        <begin position="1"/>
        <end position="11"/>
    </location>
</feature>
<comment type="function">
    <text evidence="1">Has antimicrobial activity against Gram-positive bacteria B.subtilis (MIC=150 ug/ml) and S.aureus (MIC=170 ug/ml), and against Gram-negative bacteria E.coli (MIC=170 ug/ml) and P.aeruginosa (MIC=169 ug/ml).</text>
</comment>
<comment type="subunit">
    <text evidence="1">Monomer.</text>
</comment>
<comment type="subcellular location">
    <subcellularLocation>
        <location evidence="1">Secreted</location>
        <location evidence="1">Extracellular space</location>
    </subcellularLocation>
</comment>
<comment type="tissue specificity">
    <text evidence="1">Found in the liquid endosperm contained in green fruit of coconut palms, also known as coconut water (at protein level).</text>
</comment>
<comment type="mass spectrometry"/>
<proteinExistence type="evidence at protein level"/>
<evidence type="ECO:0000269" key="1">
    <source>
    </source>
</evidence>
<evidence type="ECO:0000303" key="2">
    <source>
    </source>
</evidence>
<evidence type="ECO:0000305" key="3"/>
<reference evidence="3" key="1">
    <citation type="journal article" date="2009" name="Peptides">
        <title>Identification and structural insights of three novel antimicrobial peptides isolated from green coconut water.</title>
        <authorList>
            <person name="Mandal S.M."/>
            <person name="Dey S."/>
            <person name="Mandal M."/>
            <person name="Sarkar S."/>
            <person name="Maria-Neto S."/>
            <person name="Franco O.L."/>
        </authorList>
    </citation>
    <scope>PROTEIN SEQUENCE</scope>
    <scope>FUNCTION</scope>
    <scope>SUBUNIT</scope>
    <scope>SUBCELLULAR LOCATION</scope>
    <scope>TISSUE SPECIFICITY</scope>
    <scope>MASS SPECTROMETRY</scope>
    <source>
        <tissue evidence="1">Endosperm</tissue>
    </source>
</reference>